<sequence>MSITAERKTALIKDYARGGTDTGSPEVQVAILTERIANLTGHFKTHTKDNHSRRGLLKLVSQRRSLLDYLKRKDEGRYRTLIERLGIRR</sequence>
<reference key="1">
    <citation type="submission" date="2008-02" db="EMBL/GenBank/DDBJ databases">
        <title>Complete sequence of chromosome of Methylobacterium sp. 4-46.</title>
        <authorList>
            <consortium name="US DOE Joint Genome Institute"/>
            <person name="Copeland A."/>
            <person name="Lucas S."/>
            <person name="Lapidus A."/>
            <person name="Glavina del Rio T."/>
            <person name="Dalin E."/>
            <person name="Tice H."/>
            <person name="Bruce D."/>
            <person name="Goodwin L."/>
            <person name="Pitluck S."/>
            <person name="Chertkov O."/>
            <person name="Brettin T."/>
            <person name="Detter J.C."/>
            <person name="Han C."/>
            <person name="Kuske C.R."/>
            <person name="Schmutz J."/>
            <person name="Larimer F."/>
            <person name="Land M."/>
            <person name="Hauser L."/>
            <person name="Kyrpides N."/>
            <person name="Ivanova N."/>
            <person name="Marx C.J."/>
            <person name="Richardson P."/>
        </authorList>
    </citation>
    <scope>NUCLEOTIDE SEQUENCE [LARGE SCALE GENOMIC DNA]</scope>
    <source>
        <strain>4-46</strain>
    </source>
</reference>
<organism>
    <name type="scientific">Methylobacterium sp. (strain 4-46)</name>
    <dbReference type="NCBI Taxonomy" id="426117"/>
    <lineage>
        <taxon>Bacteria</taxon>
        <taxon>Pseudomonadati</taxon>
        <taxon>Pseudomonadota</taxon>
        <taxon>Alphaproteobacteria</taxon>
        <taxon>Hyphomicrobiales</taxon>
        <taxon>Methylobacteriaceae</taxon>
        <taxon>Methylobacterium</taxon>
    </lineage>
</organism>
<proteinExistence type="inferred from homology"/>
<accession>B0UEX4</accession>
<evidence type="ECO:0000255" key="1">
    <source>
        <dbReference type="HAMAP-Rule" id="MF_01343"/>
    </source>
</evidence>
<evidence type="ECO:0000305" key="2"/>
<feature type="chain" id="PRO_1000143141" description="Small ribosomal subunit protein uS15">
    <location>
        <begin position="1"/>
        <end position="89"/>
    </location>
</feature>
<keyword id="KW-0687">Ribonucleoprotein</keyword>
<keyword id="KW-0689">Ribosomal protein</keyword>
<keyword id="KW-0694">RNA-binding</keyword>
<keyword id="KW-0699">rRNA-binding</keyword>
<comment type="function">
    <text evidence="1">One of the primary rRNA binding proteins, it binds directly to 16S rRNA where it helps nucleate assembly of the platform of the 30S subunit by binding and bridging several RNA helices of the 16S rRNA.</text>
</comment>
<comment type="function">
    <text evidence="1">Forms an intersubunit bridge (bridge B4) with the 23S rRNA of the 50S subunit in the ribosome.</text>
</comment>
<comment type="subunit">
    <text evidence="1">Part of the 30S ribosomal subunit. Forms a bridge to the 50S subunit in the 70S ribosome, contacting the 23S rRNA.</text>
</comment>
<comment type="similarity">
    <text evidence="1">Belongs to the universal ribosomal protein uS15 family.</text>
</comment>
<gene>
    <name evidence="1" type="primary">rpsO</name>
    <name type="ordered locus">M446_4915</name>
</gene>
<dbReference type="EMBL" id="CP000943">
    <property type="protein sequence ID" value="ACA19244.1"/>
    <property type="molecule type" value="Genomic_DNA"/>
</dbReference>
<dbReference type="RefSeq" id="WP_012334631.1">
    <property type="nucleotide sequence ID" value="NC_010511.1"/>
</dbReference>
<dbReference type="SMR" id="B0UEX4"/>
<dbReference type="STRING" id="426117.M446_4915"/>
<dbReference type="KEGG" id="met:M446_4915"/>
<dbReference type="eggNOG" id="COG0184">
    <property type="taxonomic scope" value="Bacteria"/>
</dbReference>
<dbReference type="HOGENOM" id="CLU_148518_0_0_5"/>
<dbReference type="GO" id="GO:0022627">
    <property type="term" value="C:cytosolic small ribosomal subunit"/>
    <property type="evidence" value="ECO:0007669"/>
    <property type="project" value="TreeGrafter"/>
</dbReference>
<dbReference type="GO" id="GO:0019843">
    <property type="term" value="F:rRNA binding"/>
    <property type="evidence" value="ECO:0007669"/>
    <property type="project" value="UniProtKB-UniRule"/>
</dbReference>
<dbReference type="GO" id="GO:0003735">
    <property type="term" value="F:structural constituent of ribosome"/>
    <property type="evidence" value="ECO:0007669"/>
    <property type="project" value="InterPro"/>
</dbReference>
<dbReference type="GO" id="GO:0006412">
    <property type="term" value="P:translation"/>
    <property type="evidence" value="ECO:0007669"/>
    <property type="project" value="UniProtKB-UniRule"/>
</dbReference>
<dbReference type="CDD" id="cd00353">
    <property type="entry name" value="Ribosomal_S15p_S13e"/>
    <property type="match status" value="1"/>
</dbReference>
<dbReference type="FunFam" id="1.10.287.10:FF:000002">
    <property type="entry name" value="30S ribosomal protein S15"/>
    <property type="match status" value="1"/>
</dbReference>
<dbReference type="Gene3D" id="6.10.250.3130">
    <property type="match status" value="1"/>
</dbReference>
<dbReference type="Gene3D" id="1.10.287.10">
    <property type="entry name" value="S15/NS1, RNA-binding"/>
    <property type="match status" value="1"/>
</dbReference>
<dbReference type="HAMAP" id="MF_01343_B">
    <property type="entry name" value="Ribosomal_uS15_B"/>
    <property type="match status" value="1"/>
</dbReference>
<dbReference type="InterPro" id="IPR000589">
    <property type="entry name" value="Ribosomal_uS15"/>
</dbReference>
<dbReference type="InterPro" id="IPR005290">
    <property type="entry name" value="Ribosomal_uS15_bac-type"/>
</dbReference>
<dbReference type="InterPro" id="IPR009068">
    <property type="entry name" value="uS15_NS1_RNA-bd_sf"/>
</dbReference>
<dbReference type="NCBIfam" id="TIGR00952">
    <property type="entry name" value="S15_bact"/>
    <property type="match status" value="1"/>
</dbReference>
<dbReference type="PANTHER" id="PTHR23321">
    <property type="entry name" value="RIBOSOMAL PROTEIN S15, BACTERIAL AND ORGANELLAR"/>
    <property type="match status" value="1"/>
</dbReference>
<dbReference type="PANTHER" id="PTHR23321:SF26">
    <property type="entry name" value="SMALL RIBOSOMAL SUBUNIT PROTEIN US15M"/>
    <property type="match status" value="1"/>
</dbReference>
<dbReference type="Pfam" id="PF00312">
    <property type="entry name" value="Ribosomal_S15"/>
    <property type="match status" value="1"/>
</dbReference>
<dbReference type="SMART" id="SM01387">
    <property type="entry name" value="Ribosomal_S15"/>
    <property type="match status" value="1"/>
</dbReference>
<dbReference type="SUPFAM" id="SSF47060">
    <property type="entry name" value="S15/NS1 RNA-binding domain"/>
    <property type="match status" value="1"/>
</dbReference>
<dbReference type="PROSITE" id="PS00362">
    <property type="entry name" value="RIBOSOMAL_S15"/>
    <property type="match status" value="1"/>
</dbReference>
<protein>
    <recommendedName>
        <fullName evidence="1">Small ribosomal subunit protein uS15</fullName>
    </recommendedName>
    <alternativeName>
        <fullName evidence="2">30S ribosomal protein S15</fullName>
    </alternativeName>
</protein>
<name>RS15_METS4</name>